<proteinExistence type="evidence at protein level"/>
<organism>
    <name type="scientific">Rattus norvegicus</name>
    <name type="common">Rat</name>
    <dbReference type="NCBI Taxonomy" id="10116"/>
    <lineage>
        <taxon>Eukaryota</taxon>
        <taxon>Metazoa</taxon>
        <taxon>Chordata</taxon>
        <taxon>Craniata</taxon>
        <taxon>Vertebrata</taxon>
        <taxon>Euteleostomi</taxon>
        <taxon>Mammalia</taxon>
        <taxon>Eutheria</taxon>
        <taxon>Euarchontoglires</taxon>
        <taxon>Glires</taxon>
        <taxon>Rodentia</taxon>
        <taxon>Myomorpha</taxon>
        <taxon>Muroidea</taxon>
        <taxon>Muridae</taxon>
        <taxon>Murinae</taxon>
        <taxon>Rattus</taxon>
    </lineage>
</organism>
<dbReference type="EC" id="2.3.1.-" evidence="6"/>
<dbReference type="EC" id="3.1.1.32" evidence="6"/>
<dbReference type="EC" id="3.1.1.4" evidence="6"/>
<dbReference type="EC" id="3.1.1.5" evidence="2"/>
<dbReference type="EMBL" id="AY490816">
    <property type="protein sequence ID" value="AAS66767.1"/>
    <property type="molecule type" value="mRNA"/>
</dbReference>
<dbReference type="EMBL" id="CH473972">
    <property type="protein sequence ID" value="EDL92440.1"/>
    <property type="molecule type" value="Genomic_DNA"/>
</dbReference>
<dbReference type="EMBL" id="BC098894">
    <property type="protein sequence ID" value="AAH98894.1"/>
    <property type="molecule type" value="mRNA"/>
</dbReference>
<dbReference type="RefSeq" id="NP_001004277.1">
    <property type="nucleotide sequence ID" value="NM_001004277.2"/>
</dbReference>
<dbReference type="SMR" id="Q675A5"/>
<dbReference type="FunCoup" id="Q675A5">
    <property type="interactions" value="845"/>
</dbReference>
<dbReference type="STRING" id="10116.ENSRNOP00000026996"/>
<dbReference type="ESTHER" id="ratno-q675a5">
    <property type="family name" value="PC-sterol_acyltransferase"/>
</dbReference>
<dbReference type="GlyCosmos" id="Q675A5">
    <property type="glycosylation" value="4 sites, No reported glycans"/>
</dbReference>
<dbReference type="GlyGen" id="Q675A5">
    <property type="glycosylation" value="4 sites"/>
</dbReference>
<dbReference type="PhosphoSitePlus" id="Q675A5"/>
<dbReference type="PaxDb" id="10116-ENSRNOP00000026996"/>
<dbReference type="Ensembl" id="ENSRNOT00000026996.6">
    <property type="protein sequence ID" value="ENSRNOP00000026996.4"/>
    <property type="gene ID" value="ENSRNOG00000019859.6"/>
</dbReference>
<dbReference type="GeneID" id="361401"/>
<dbReference type="KEGG" id="rno:361401"/>
<dbReference type="UCSC" id="RGD:1302982">
    <property type="organism name" value="rat"/>
</dbReference>
<dbReference type="AGR" id="RGD:1302982"/>
<dbReference type="CTD" id="23659"/>
<dbReference type="RGD" id="1302982">
    <property type="gene designation" value="Pla2g15"/>
</dbReference>
<dbReference type="eggNOG" id="KOG2369">
    <property type="taxonomic scope" value="Eukaryota"/>
</dbReference>
<dbReference type="GeneTree" id="ENSGT00940000157499"/>
<dbReference type="HOGENOM" id="CLU_037070_1_1_1"/>
<dbReference type="InParanoid" id="Q675A5"/>
<dbReference type="OMA" id="QMTPPGV"/>
<dbReference type="OrthoDB" id="190846at2759"/>
<dbReference type="PhylomeDB" id="Q675A5"/>
<dbReference type="TreeFam" id="TF313258"/>
<dbReference type="Reactome" id="R-RNO-1483115">
    <property type="pathway name" value="Hydrolysis of LPC"/>
</dbReference>
<dbReference type="PRO" id="PR:Q675A5"/>
<dbReference type="Proteomes" id="UP000002494">
    <property type="component" value="Chromosome 19"/>
</dbReference>
<dbReference type="Proteomes" id="UP000234681">
    <property type="component" value="Chromosome 19"/>
</dbReference>
<dbReference type="Bgee" id="ENSRNOG00000019859">
    <property type="expression patterns" value="Expressed in spleen and 19 other cell types or tissues"/>
</dbReference>
<dbReference type="GO" id="GO:0005615">
    <property type="term" value="C:extracellular space"/>
    <property type="evidence" value="ECO:0000250"/>
    <property type="project" value="UniProtKB"/>
</dbReference>
<dbReference type="GO" id="GO:0005764">
    <property type="term" value="C:lysosome"/>
    <property type="evidence" value="ECO:0000250"/>
    <property type="project" value="UniProtKB"/>
</dbReference>
<dbReference type="GO" id="GO:0016020">
    <property type="term" value="C:membrane"/>
    <property type="evidence" value="ECO:0007669"/>
    <property type="project" value="UniProtKB-SubCell"/>
</dbReference>
<dbReference type="GO" id="GO:0005654">
    <property type="term" value="C:nucleoplasm"/>
    <property type="evidence" value="ECO:0007669"/>
    <property type="project" value="Ensembl"/>
</dbReference>
<dbReference type="GO" id="GO:0016411">
    <property type="term" value="F:acylglycerol O-acyltransferase activity"/>
    <property type="evidence" value="ECO:0000250"/>
    <property type="project" value="UniProtKB"/>
</dbReference>
<dbReference type="GO" id="GO:0047499">
    <property type="term" value="F:calcium-independent phospholipase A2 activity"/>
    <property type="evidence" value="ECO:0000314"/>
    <property type="project" value="RGD"/>
</dbReference>
<dbReference type="GO" id="GO:0008374">
    <property type="term" value="F:O-acyltransferase activity"/>
    <property type="evidence" value="ECO:0000314"/>
    <property type="project" value="UniProtKB"/>
</dbReference>
<dbReference type="GO" id="GO:0008970">
    <property type="term" value="F:phospholipase A1 activity"/>
    <property type="evidence" value="ECO:0000250"/>
    <property type="project" value="UniProtKB"/>
</dbReference>
<dbReference type="GO" id="GO:0008270">
    <property type="term" value="F:zinc ion binding"/>
    <property type="evidence" value="ECO:0000250"/>
    <property type="project" value="UniProtKB"/>
</dbReference>
<dbReference type="GO" id="GO:0006672">
    <property type="term" value="P:ceramide metabolic process"/>
    <property type="evidence" value="ECO:0000314"/>
    <property type="project" value="UniProtKB"/>
</dbReference>
<dbReference type="GO" id="GO:0006651">
    <property type="term" value="P:diacylglycerol biosynthetic process"/>
    <property type="evidence" value="ECO:0000250"/>
    <property type="project" value="UniProtKB"/>
</dbReference>
<dbReference type="GO" id="GO:0006631">
    <property type="term" value="P:fatty acid metabolic process"/>
    <property type="evidence" value="ECO:0007669"/>
    <property type="project" value="UniProtKB-KW"/>
</dbReference>
<dbReference type="GO" id="GO:0006650">
    <property type="term" value="P:glycerophospholipid metabolic process"/>
    <property type="evidence" value="ECO:0000250"/>
    <property type="project" value="UniProtKB"/>
</dbReference>
<dbReference type="GO" id="GO:0034638">
    <property type="term" value="P:phosphatidylcholine catabolic process"/>
    <property type="evidence" value="ECO:0000250"/>
    <property type="project" value="UniProtKB"/>
</dbReference>
<dbReference type="GO" id="GO:0046470">
    <property type="term" value="P:phosphatidylcholine metabolic process"/>
    <property type="evidence" value="ECO:0000315"/>
    <property type="project" value="RGD"/>
</dbReference>
<dbReference type="GO" id="GO:0046338">
    <property type="term" value="P:phosphatidylethanolamine catabolic process"/>
    <property type="evidence" value="ECO:0000250"/>
    <property type="project" value="UniProtKB"/>
</dbReference>
<dbReference type="GO" id="GO:0046471">
    <property type="term" value="P:phosphatidylglycerol metabolic process"/>
    <property type="evidence" value="ECO:0000250"/>
    <property type="project" value="UniProtKB"/>
</dbReference>
<dbReference type="GO" id="GO:0006658">
    <property type="term" value="P:phosphatidylserine metabolic process"/>
    <property type="evidence" value="ECO:0000250"/>
    <property type="project" value="UniProtKB"/>
</dbReference>
<dbReference type="FunFam" id="3.40.50.1820:FF:000221">
    <property type="entry name" value="Group XV phospholipase A2"/>
    <property type="match status" value="1"/>
</dbReference>
<dbReference type="FunFam" id="3.40.50.1820:FF:000166">
    <property type="entry name" value="group XV phospholipase A2 isoform X1"/>
    <property type="match status" value="1"/>
</dbReference>
<dbReference type="Gene3D" id="3.40.50.1820">
    <property type="entry name" value="alpha/beta hydrolase"/>
    <property type="match status" value="2"/>
</dbReference>
<dbReference type="InterPro" id="IPR029058">
    <property type="entry name" value="AB_hydrolase_fold"/>
</dbReference>
<dbReference type="InterPro" id="IPR003386">
    <property type="entry name" value="LACT/PDAT_acylTrfase"/>
</dbReference>
<dbReference type="PANTHER" id="PTHR11440">
    <property type="entry name" value="LECITHIN-CHOLESTEROL ACYLTRANSFERASE-RELATED"/>
    <property type="match status" value="1"/>
</dbReference>
<dbReference type="Pfam" id="PF02450">
    <property type="entry name" value="LCAT"/>
    <property type="match status" value="1"/>
</dbReference>
<dbReference type="SUPFAM" id="SSF53474">
    <property type="entry name" value="alpha/beta-Hydrolases"/>
    <property type="match status" value="1"/>
</dbReference>
<evidence type="ECO:0000250" key="1">
    <source>
        <dbReference type="UniProtKB" id="Q6XPZ3"/>
    </source>
</evidence>
<evidence type="ECO:0000250" key="2">
    <source>
        <dbReference type="UniProtKB" id="Q8NCC3"/>
    </source>
</evidence>
<evidence type="ECO:0000250" key="3">
    <source>
        <dbReference type="UniProtKB" id="Q8VEB4"/>
    </source>
</evidence>
<evidence type="ECO:0000250" key="4">
    <source>
        <dbReference type="UniProtKB" id="Q8WMP9"/>
    </source>
</evidence>
<evidence type="ECO:0000255" key="5"/>
<evidence type="ECO:0000269" key="6">
    <source>
    </source>
</evidence>
<evidence type="ECO:0000303" key="7">
    <source>
    </source>
</evidence>
<evidence type="ECO:0000305" key="8">
    <source>
    </source>
</evidence>
<keyword id="KW-0012">Acyltransferase</keyword>
<keyword id="KW-1015">Disulfide bond</keyword>
<keyword id="KW-0276">Fatty acid metabolism</keyword>
<keyword id="KW-0325">Glycoprotein</keyword>
<keyword id="KW-0378">Hydrolase</keyword>
<keyword id="KW-0443">Lipid metabolism</keyword>
<keyword id="KW-0458">Lysosome</keyword>
<keyword id="KW-0472">Membrane</keyword>
<keyword id="KW-0479">Metal-binding</keyword>
<keyword id="KW-1185">Reference proteome</keyword>
<keyword id="KW-0964">Secreted</keyword>
<keyword id="KW-0732">Signal</keyword>
<keyword id="KW-0808">Transferase</keyword>
<keyword id="KW-0862">Zinc</keyword>
<sequence>MDRHLCICREIQLRSGLLFPFLLLMMLADLALPAQRHPPVVLVPGDLGNQLEAKLDKPKVVHYLCSKRTDSYFTLWLNLELLLPVIIDCWIDNIRLVYNRTSRTTQFPDGVDVRVPGFGETFSLEFLDPSKRNVGSYFYTMVESLVGWGYTRGEDVRGAPYDWRRAPNENGPYFLALQEMIEEMYQMYGGPVVLVAHSMGNMYMLYFLQRQPQAWKDKYIQAFVSLGAPWGGVAKTLRVLASGDNNRIPVIGPLKIREQQRSAVSTSWLLPYNHTWSHEKVFVYTPTANYTLRDYHRFFQDIGFEDGWFMRQDTQGLVEALVPPGVELHCLYGTGVPTPNSFYYENFPDRDPKICFGDGDGTVNLESVLQCQAWQSRQEHKVSLQELPGSEHIEMLANATTLAYLKRVLLEEP</sequence>
<protein>
    <recommendedName>
        <fullName>Lysosomal phospholipase A and acyltransferase</fullName>
        <ecNumber evidence="6">2.3.1.-</ecNumber>
        <ecNumber evidence="6">3.1.1.32</ecNumber>
        <ecNumber evidence="6">3.1.1.4</ecNumber>
    </recommendedName>
    <alternativeName>
        <fullName evidence="7">1-O-acylceramide synthase</fullName>
        <shortName evidence="7">ACS</shortName>
    </alternativeName>
    <alternativeName>
        <fullName evidence="2">LCAT-like lysophospholipase</fullName>
        <shortName evidence="2">LLPL</shortName>
        <ecNumber evidence="2">3.1.1.5</ecNumber>
    </alternativeName>
    <alternativeName>
        <fullName>Lysophospholipase 3</fullName>
    </alternativeName>
    <alternativeName>
        <fullName evidence="7">Lysosomal phospholipase A2</fullName>
        <shortName evidence="7">LPLA2</shortName>
    </alternativeName>
    <alternativeName>
        <fullName evidence="3">Phospholipase A2 group XV</fullName>
    </alternativeName>
</protein>
<name>PAG15_RAT</name>
<accession>Q675A5</accession>
<comment type="function">
    <text evidence="2 3 6">Has dual calcium-independent phospholipase and O-acyltransferase activities with a potential role in glycerophospholipid homeostasis and remodeling of acyl groups of lipophilic alcohols present in acidic cellular compartments (PubMed:15294901). Catalyzes hydrolysis of the ester bond of the fatty acyl group attached at sn-1 or sn-2 position of phospholipids (phospholipase A1 or A2 activity) and transfer it to the hydroxyl group at the first carbon of lipophilic alcohols (O-acyltransferase activity) (PubMed:15294901). Among preferred fatty acyl donors are phosphatidylcholines, phosphatidylethanolamines, phosphatidylglycerols and phosphatidylserines. Favors sn-2 over sn-1 deacylation of unsaturated fatty acyl groups of phosphatidylcholines, phosphatidylethanolamines, and phosphatidylglycerols (By similarity). Among preferred fatty acyl acceptors are natural lipophilic alcohols including short-chain ceramide N-acetyl-sphingosine (C2 ceramide), alkylacylglycerols, monoacylglycerols, and acylethanolamides such as anandamide and oleoylethanolamide. Selectively hydrolyzes the sn-1 fatty acyl group of truncated oxidized phospholipids and may play a role in detoxification of reactive oxidized phospholipids during oxidative stress (By similarity). Required for normal phospholipid degradation in alveolar macrophages with potential implications in the clearance of pulmonary surfactant, which is mainly composed of dipalmitoylphosphatidylcholine (1,2-dihexadecanoyl-sn-glycero-3-phosphocholine) (PubMed:15294901). Involved in the first step of bis(monoacylglycero)phosphate (BMP) de novo synthesis from phosphatidylglycerol (1,2-diacyl-sn-glycero-3-phospho-(1'-sn-glycerol), PG) (By similarity). BMP is an important player in cargo sorting and degradation, regulation of cellular cholesterol levels and intercellular communication. At neutral pH, hydrolyzes the sn-1 fatty acyl group of the lysophosphatidylcholines (By similarity).</text>
</comment>
<comment type="catalytic activity">
    <reaction evidence="6">
        <text>a 1,2-diacyl-sn-glycero-3-phosphocholine + H2O = a 2-acyl-sn-glycero-3-phosphocholine + a fatty acid + H(+)</text>
        <dbReference type="Rhea" id="RHEA:18689"/>
        <dbReference type="ChEBI" id="CHEBI:15377"/>
        <dbReference type="ChEBI" id="CHEBI:15378"/>
        <dbReference type="ChEBI" id="CHEBI:28868"/>
        <dbReference type="ChEBI" id="CHEBI:57643"/>
        <dbReference type="ChEBI" id="CHEBI:57875"/>
        <dbReference type="EC" id="3.1.1.32"/>
    </reaction>
    <physiologicalReaction direction="left-to-right" evidence="6">
        <dbReference type="Rhea" id="RHEA:18690"/>
    </physiologicalReaction>
</comment>
<comment type="catalytic activity">
    <reaction evidence="6">
        <text>1,2-dihexadecanoyl-sn-glycero-3-phosphocholine + H2O = 2-hexadecanoyl-sn-glycero-3-phosphocholine + hexadecanoate + H(+)</text>
        <dbReference type="Rhea" id="RHEA:40487"/>
        <dbReference type="ChEBI" id="CHEBI:7896"/>
        <dbReference type="ChEBI" id="CHEBI:15377"/>
        <dbReference type="ChEBI" id="CHEBI:15378"/>
        <dbReference type="ChEBI" id="CHEBI:72999"/>
        <dbReference type="ChEBI" id="CHEBI:76078"/>
    </reaction>
    <physiologicalReaction direction="left-to-right" evidence="6">
        <dbReference type="Rhea" id="RHEA:40488"/>
    </physiologicalReaction>
</comment>
<comment type="catalytic activity">
    <reaction evidence="3">
        <text>1-hexadecanoyl-2-(9Z-octadecenoyl)-sn-glycero-3-phosphocholine + H2O = 2-(9Z-octadecenoyl)-sn-glycero-3-phosphocholine + hexadecanoate + H(+)</text>
        <dbReference type="Rhea" id="RHEA:38783"/>
        <dbReference type="ChEBI" id="CHEBI:7896"/>
        <dbReference type="ChEBI" id="CHEBI:15377"/>
        <dbReference type="ChEBI" id="CHEBI:15378"/>
        <dbReference type="ChEBI" id="CHEBI:73001"/>
        <dbReference type="ChEBI" id="CHEBI:76071"/>
    </reaction>
    <physiologicalReaction direction="left-to-right" evidence="3">
        <dbReference type="Rhea" id="RHEA:38784"/>
    </physiologicalReaction>
</comment>
<comment type="catalytic activity">
    <reaction evidence="8">
        <text>1,2-di-(9Z-octadecenoyl)-sn-glycero-3-phosphocholine + H2O = 2-(9Z-octadecenoyl)-sn-glycero-3-phosphocholine + (9Z)-octadecenoate + H(+)</text>
        <dbReference type="Rhea" id="RHEA:56448"/>
        <dbReference type="ChEBI" id="CHEBI:15377"/>
        <dbReference type="ChEBI" id="CHEBI:15378"/>
        <dbReference type="ChEBI" id="CHEBI:30823"/>
        <dbReference type="ChEBI" id="CHEBI:74669"/>
        <dbReference type="ChEBI" id="CHEBI:76071"/>
    </reaction>
    <physiologicalReaction direction="left-to-right" evidence="8">
        <dbReference type="Rhea" id="RHEA:56449"/>
    </physiologicalReaction>
</comment>
<comment type="catalytic activity">
    <reaction evidence="3">
        <text>1-hexadecanoyl-2-glutaroyl-sn-glycero-3-phosphocholine + H2O = 2-glutaroyl-sn-glycero-3-phosphocholine + hexadecanoate + H(+)</text>
        <dbReference type="Rhea" id="RHEA:62480"/>
        <dbReference type="ChEBI" id="CHEBI:7896"/>
        <dbReference type="ChEBI" id="CHEBI:15377"/>
        <dbReference type="ChEBI" id="CHEBI:15378"/>
        <dbReference type="ChEBI" id="CHEBI:77756"/>
        <dbReference type="ChEBI" id="CHEBI:145781"/>
    </reaction>
    <physiologicalReaction direction="left-to-right" evidence="3">
        <dbReference type="Rhea" id="RHEA:62481"/>
    </physiologicalReaction>
</comment>
<comment type="catalytic activity">
    <reaction evidence="3">
        <text>1-hexadecanoyl-2-nonadioyl-sn-glycero-3-phosphocholine + H2O = 2-nonadioyl-sn-glycero-3-phosphocholine + hexadecanoate + H(+)</text>
        <dbReference type="Rhea" id="RHEA:62464"/>
        <dbReference type="ChEBI" id="CHEBI:7896"/>
        <dbReference type="ChEBI" id="CHEBI:15377"/>
        <dbReference type="ChEBI" id="CHEBI:15378"/>
        <dbReference type="ChEBI" id="CHEBI:78207"/>
        <dbReference type="ChEBI" id="CHEBI:145780"/>
    </reaction>
    <physiologicalReaction direction="left-to-right" evidence="3">
        <dbReference type="Rhea" id="RHEA:62465"/>
    </physiologicalReaction>
</comment>
<comment type="catalytic activity">
    <reaction evidence="3">
        <text>1-hexadecanoyl-2-(5-oxopentanoyl)-sn-glycero-3-phosphocholine + H2O = 2-(5-oxopentanoyl)-sn-glycero-3-phosphocholine + hexadecanoate + H(+)</text>
        <dbReference type="Rhea" id="RHEA:62484"/>
        <dbReference type="ChEBI" id="CHEBI:7896"/>
        <dbReference type="ChEBI" id="CHEBI:15377"/>
        <dbReference type="ChEBI" id="CHEBI:15378"/>
        <dbReference type="ChEBI" id="CHEBI:77890"/>
        <dbReference type="ChEBI" id="CHEBI:145782"/>
    </reaction>
    <physiologicalReaction direction="left-to-right" evidence="3">
        <dbReference type="Rhea" id="RHEA:62485"/>
    </physiologicalReaction>
</comment>
<comment type="catalytic activity">
    <reaction evidence="3">
        <text>1-hexadecanoyl-2-(9-oxononanoyl)-sn-glycero-3-phosphocholine + H2O = 2-(9-oxononanoyl)-sn-glycero-3-phosphocholine + hexadecanoate + H(+)</text>
        <dbReference type="Rhea" id="RHEA:62488"/>
        <dbReference type="ChEBI" id="CHEBI:7896"/>
        <dbReference type="ChEBI" id="CHEBI:15377"/>
        <dbReference type="ChEBI" id="CHEBI:15378"/>
        <dbReference type="ChEBI" id="CHEBI:61042"/>
        <dbReference type="ChEBI" id="CHEBI:145783"/>
    </reaction>
    <physiologicalReaction direction="left-to-right" evidence="3">
        <dbReference type="Rhea" id="RHEA:62489"/>
    </physiologicalReaction>
</comment>
<comment type="catalytic activity">
    <reaction evidence="6">
        <text>a 1,2-diacyl-sn-glycero-3-phosphocholine + H2O = a 1-acyl-sn-glycero-3-phosphocholine + a fatty acid + H(+)</text>
        <dbReference type="Rhea" id="RHEA:15801"/>
        <dbReference type="ChEBI" id="CHEBI:15377"/>
        <dbReference type="ChEBI" id="CHEBI:15378"/>
        <dbReference type="ChEBI" id="CHEBI:28868"/>
        <dbReference type="ChEBI" id="CHEBI:57643"/>
        <dbReference type="ChEBI" id="CHEBI:58168"/>
        <dbReference type="EC" id="3.1.1.4"/>
    </reaction>
    <physiologicalReaction direction="left-to-right" evidence="6">
        <dbReference type="Rhea" id="RHEA:15802"/>
    </physiologicalReaction>
</comment>
<comment type="catalytic activity">
    <reaction evidence="6">
        <text>1,2-dihexadecanoyl-sn-glycero-3-phosphocholine + H2O = 1-hexadecanoyl-sn-glycero-3-phosphocholine + hexadecanoate + H(+)</text>
        <dbReference type="Rhea" id="RHEA:41223"/>
        <dbReference type="ChEBI" id="CHEBI:7896"/>
        <dbReference type="ChEBI" id="CHEBI:15377"/>
        <dbReference type="ChEBI" id="CHEBI:15378"/>
        <dbReference type="ChEBI" id="CHEBI:72998"/>
        <dbReference type="ChEBI" id="CHEBI:72999"/>
    </reaction>
    <physiologicalReaction direction="left-to-right" evidence="6">
        <dbReference type="Rhea" id="RHEA:41224"/>
    </physiologicalReaction>
</comment>
<comment type="catalytic activity">
    <reaction evidence="3">
        <text>1-hexadecanoyl-2-(9Z-octadecenoyl)-sn-glycero-3-phosphocholine + H2O = 1-hexadecanoyl-sn-glycero-3-phosphocholine + (9Z)-octadecenoate + H(+)</text>
        <dbReference type="Rhea" id="RHEA:38779"/>
        <dbReference type="ChEBI" id="CHEBI:15377"/>
        <dbReference type="ChEBI" id="CHEBI:15378"/>
        <dbReference type="ChEBI" id="CHEBI:30823"/>
        <dbReference type="ChEBI" id="CHEBI:72998"/>
        <dbReference type="ChEBI" id="CHEBI:73001"/>
    </reaction>
    <physiologicalReaction direction="left-to-right" evidence="3">
        <dbReference type="Rhea" id="RHEA:38780"/>
    </physiologicalReaction>
</comment>
<comment type="catalytic activity">
    <reaction evidence="8">
        <text>1,2-di-(9Z-octadecenoyl)-sn-glycero-3-phosphocholine + H2O = 1-(9Z-octadecenoyl)-sn-glycero-3-phosphocholine + (9Z)-octadecenoate + H(+)</text>
        <dbReference type="Rhea" id="RHEA:40923"/>
        <dbReference type="ChEBI" id="CHEBI:15377"/>
        <dbReference type="ChEBI" id="CHEBI:15378"/>
        <dbReference type="ChEBI" id="CHEBI:28610"/>
        <dbReference type="ChEBI" id="CHEBI:30823"/>
        <dbReference type="ChEBI" id="CHEBI:74669"/>
    </reaction>
    <physiologicalReaction direction="left-to-right" evidence="8">
        <dbReference type="Rhea" id="RHEA:40924"/>
    </physiologicalReaction>
</comment>
<comment type="catalytic activity">
    <reaction evidence="2">
        <text>a 1-acyl-sn-glycero-3-phosphocholine + H2O = sn-glycerol 3-phosphocholine + a fatty acid + H(+)</text>
        <dbReference type="Rhea" id="RHEA:15177"/>
        <dbReference type="ChEBI" id="CHEBI:15377"/>
        <dbReference type="ChEBI" id="CHEBI:15378"/>
        <dbReference type="ChEBI" id="CHEBI:16870"/>
        <dbReference type="ChEBI" id="CHEBI:28868"/>
        <dbReference type="ChEBI" id="CHEBI:58168"/>
        <dbReference type="EC" id="3.1.1.5"/>
    </reaction>
    <physiologicalReaction direction="left-to-right" evidence="2">
        <dbReference type="Rhea" id="RHEA:15178"/>
    </physiologicalReaction>
</comment>
<comment type="catalytic activity">
    <reaction evidence="2">
        <text>1-hexadecanoyl-sn-glycero-3-phosphocholine + H2O = sn-glycerol 3-phosphocholine + hexadecanoate + H(+)</text>
        <dbReference type="Rhea" id="RHEA:40435"/>
        <dbReference type="ChEBI" id="CHEBI:7896"/>
        <dbReference type="ChEBI" id="CHEBI:15377"/>
        <dbReference type="ChEBI" id="CHEBI:15378"/>
        <dbReference type="ChEBI" id="CHEBI:16870"/>
        <dbReference type="ChEBI" id="CHEBI:72998"/>
    </reaction>
    <physiologicalReaction direction="left-to-right" evidence="2">
        <dbReference type="Rhea" id="RHEA:40436"/>
    </physiologicalReaction>
</comment>
<comment type="catalytic activity">
    <reaction evidence="3">
        <text>N-(acetyl)-sphing-4-enine + a 1,2-diacyl-sn-glycero-3-phosphoethanolamine = 1-O-acyl-N-(acetyl)-sphing-4-enine + a 2-acyl-sn-glycero-3-phosphoethanolamine</text>
        <dbReference type="Rhea" id="RHEA:44536"/>
        <dbReference type="ChEBI" id="CHEBI:46979"/>
        <dbReference type="ChEBI" id="CHEBI:64612"/>
        <dbReference type="ChEBI" id="CHEBI:65213"/>
        <dbReference type="ChEBI" id="CHEBI:84483"/>
    </reaction>
    <physiologicalReaction direction="left-to-right" evidence="3">
        <dbReference type="Rhea" id="RHEA:44537"/>
    </physiologicalReaction>
</comment>
<comment type="catalytic activity">
    <reaction evidence="3">
        <text>1-hexadecanoyl-2-(9Z-octadecenoyl)-sn-glycero-3-phosphoethanolamine + N-(acetyl)-sphing-4-enine = 2-(9Z-octadecenoyl)-sn-glycero-3-phosphoethanolamine + 1-hexadecanoyl-N-(acetyl)-sphing-4-enine</text>
        <dbReference type="Rhea" id="RHEA:38827"/>
        <dbReference type="ChEBI" id="CHEBI:46979"/>
        <dbReference type="ChEBI" id="CHEBI:73007"/>
        <dbReference type="ChEBI" id="CHEBI:76077"/>
        <dbReference type="ChEBI" id="CHEBI:76088"/>
    </reaction>
    <physiologicalReaction direction="left-to-right" evidence="3">
        <dbReference type="Rhea" id="RHEA:38828"/>
    </physiologicalReaction>
</comment>
<comment type="catalytic activity">
    <reaction evidence="3">
        <text>1-hexadecanoyl-2-(9Z,12Z-octadecadienoyl)-sn-glycero-3-phosphoethanolamine + N-(acetyl)-sphing-4-enine = 2-(9Z,12Z)-octadecadienoyl-sn-glycero-3-phosphoethanolamine + 1-hexadecanoyl-N-(acetyl)-sphing-4-enine</text>
        <dbReference type="Rhea" id="RHEA:38831"/>
        <dbReference type="ChEBI" id="CHEBI:46979"/>
        <dbReference type="ChEBI" id="CHEBI:73008"/>
        <dbReference type="ChEBI" id="CHEBI:76077"/>
        <dbReference type="ChEBI" id="CHEBI:76090"/>
    </reaction>
    <physiologicalReaction direction="left-to-right" evidence="3">
        <dbReference type="Rhea" id="RHEA:38832"/>
    </physiologicalReaction>
</comment>
<comment type="catalytic activity">
    <reaction evidence="3">
        <text>1-hexadecanoyl-2-(5Z,8Z,11Z,14Z-eicosatetraenoyl)-sn-glycero-3-phosphoethanolamine + N-(acetyl)-sphing-4-enine = 2-(5Z,8Z,11Z,14Z)-eicosatetraenoyl-sn-glycero-3-phosphoethanolamine + 1-hexadecanoyl-N-(acetyl)-sphing-4-enine</text>
        <dbReference type="Rhea" id="RHEA:38843"/>
        <dbReference type="ChEBI" id="CHEBI:46979"/>
        <dbReference type="ChEBI" id="CHEBI:73009"/>
        <dbReference type="ChEBI" id="CHEBI:76077"/>
        <dbReference type="ChEBI" id="CHEBI:76091"/>
    </reaction>
    <physiologicalReaction direction="left-to-right" evidence="3">
        <dbReference type="Rhea" id="RHEA:38844"/>
    </physiologicalReaction>
</comment>
<comment type="catalytic activity">
    <reaction evidence="3">
        <text>N-(acetyl)-sphing-4-enine + a 1,2-diacyl-sn-glycero-3-phosphoethanolamine = 1-O-acyl-N-(acetyl)-sphing-4-enine + a 1-acyl-sn-glycero-3-phosphoethanolamine</text>
        <dbReference type="Rhea" id="RHEA:44532"/>
        <dbReference type="ChEBI" id="CHEBI:46979"/>
        <dbReference type="ChEBI" id="CHEBI:64381"/>
        <dbReference type="ChEBI" id="CHEBI:64612"/>
        <dbReference type="ChEBI" id="CHEBI:84483"/>
    </reaction>
    <physiologicalReaction direction="left-to-right" evidence="3">
        <dbReference type="Rhea" id="RHEA:44533"/>
    </physiologicalReaction>
</comment>
<comment type="catalytic activity">
    <reaction evidence="3">
        <text>1-hexadecanoyl-2-(9Z-octadecenoyl)-sn-glycero-3-phosphoethanolamine + N-(acetyl)-sphing-4-enine = 1-(9Z-octadecenoyl)-N-(acetyl)-sphing-4-enine + 1-hexadecanoyl-sn-glycero-3-phosphoethanolamine</text>
        <dbReference type="Rhea" id="RHEA:38823"/>
        <dbReference type="ChEBI" id="CHEBI:46979"/>
        <dbReference type="ChEBI" id="CHEBI:73004"/>
        <dbReference type="ChEBI" id="CHEBI:73007"/>
        <dbReference type="ChEBI" id="CHEBI:76054"/>
    </reaction>
    <physiologicalReaction direction="left-to-right" evidence="3">
        <dbReference type="Rhea" id="RHEA:38824"/>
    </physiologicalReaction>
</comment>
<comment type="catalytic activity">
    <reaction evidence="3">
        <text>1-hexadecanoyl-2-(9Z,12Z-octadecadienoyl)-sn-glycero-3-phosphoethanolamine + N-(acetyl)-sphing-4-enine = 1-(9Z,12Z-octadecadienoyl)-N-acetylsphing-4-enine + 1-hexadecanoyl-sn-glycero-3-phosphoethanolamine</text>
        <dbReference type="Rhea" id="RHEA:38835"/>
        <dbReference type="ChEBI" id="CHEBI:46979"/>
        <dbReference type="ChEBI" id="CHEBI:73004"/>
        <dbReference type="ChEBI" id="CHEBI:73008"/>
        <dbReference type="ChEBI" id="CHEBI:76086"/>
    </reaction>
    <physiologicalReaction direction="left-to-right" evidence="3">
        <dbReference type="Rhea" id="RHEA:38836"/>
    </physiologicalReaction>
</comment>
<comment type="catalytic activity">
    <reaction evidence="3">
        <text>1-hexadecanoyl-2-(5Z,8Z,11Z,14Z-eicosatetraenoyl)-sn-glycero-3-phosphoethanolamine + N-(acetyl)-sphing-4-enine = 1-(5Z,8Z,11Z,14Z)-eicosatetraenoyl-N-(acetyl)-sphing-4-enine + 1-hexadecanoyl-sn-glycero-3-phosphoethanolamine</text>
        <dbReference type="Rhea" id="RHEA:38839"/>
        <dbReference type="ChEBI" id="CHEBI:46979"/>
        <dbReference type="ChEBI" id="CHEBI:73004"/>
        <dbReference type="ChEBI" id="CHEBI:73009"/>
        <dbReference type="ChEBI" id="CHEBI:76080"/>
    </reaction>
    <physiologicalReaction direction="left-to-right" evidence="3">
        <dbReference type="Rhea" id="RHEA:38840"/>
    </physiologicalReaction>
</comment>
<comment type="catalytic activity">
    <reaction evidence="8">
        <text>N-(acetyl)-sphing-4-enine + a 1,2-diacyl-sn-glycero-3-phosphocholine = 1-O-acyl-N-(acetyl)-sphing-4-enine + a 2-acyl-sn-glycero-3-phosphocholine</text>
        <dbReference type="Rhea" id="RHEA:44512"/>
        <dbReference type="ChEBI" id="CHEBI:46979"/>
        <dbReference type="ChEBI" id="CHEBI:57643"/>
        <dbReference type="ChEBI" id="CHEBI:57875"/>
        <dbReference type="ChEBI" id="CHEBI:84483"/>
    </reaction>
    <physiologicalReaction direction="left-to-right" evidence="8">
        <dbReference type="Rhea" id="RHEA:44513"/>
    </physiologicalReaction>
</comment>
<comment type="catalytic activity">
    <reaction evidence="3">
        <text>1-hexadecanoyl-2-(9Z-octadecenoyl)-sn-glycero-3-phosphocholine + N-(acetyl)-sphing-4-enine = 1-hexadecanoyl-N-(acetyl)-sphing-4-enine + 2-(9Z-octadecenoyl)-sn-glycero-3-phosphocholine</text>
        <dbReference type="Rhea" id="RHEA:38759"/>
        <dbReference type="ChEBI" id="CHEBI:46979"/>
        <dbReference type="ChEBI" id="CHEBI:73001"/>
        <dbReference type="ChEBI" id="CHEBI:76071"/>
        <dbReference type="ChEBI" id="CHEBI:76077"/>
    </reaction>
    <physiologicalReaction direction="left-to-right" evidence="3">
        <dbReference type="Rhea" id="RHEA:38760"/>
    </physiologicalReaction>
</comment>
<comment type="catalytic activity">
    <reaction evidence="3">
        <text>1-hexadecanoyl-2-(9Z,12Z-octadecadienoyl)-sn-glycero-3-phosphocholine + N-(acetyl)-sphing-4-enine = 2-(9Z,12Z-octadecadienoyl)-sn-glycero-3-phosphocholine + 1-hexadecanoyl-N-(acetyl)-sphing-4-enine</text>
        <dbReference type="Rhea" id="RHEA:38811"/>
        <dbReference type="ChEBI" id="CHEBI:46979"/>
        <dbReference type="ChEBI" id="CHEBI:73002"/>
        <dbReference type="ChEBI" id="CHEBI:76077"/>
        <dbReference type="ChEBI" id="CHEBI:76084"/>
    </reaction>
    <physiologicalReaction direction="left-to-right" evidence="3">
        <dbReference type="Rhea" id="RHEA:38812"/>
    </physiologicalReaction>
</comment>
<comment type="catalytic activity">
    <reaction evidence="3">
        <text>1-hexadecanoyl-2-(5Z,8Z,11Z,14Z-eicosatetraenoyl)-sn-glycero-3-phosphocholine + N-(acetyl)-sphing-4-enine = 1-hexadecanoyl-N-(acetyl)-sphing-4-enine + 2-(5Z,8Z,11Z,14Z)-eicosatetraenoyl-sn-glycero-3-phosphocholine</text>
        <dbReference type="Rhea" id="RHEA:38775"/>
        <dbReference type="ChEBI" id="CHEBI:46979"/>
        <dbReference type="ChEBI" id="CHEBI:73003"/>
        <dbReference type="ChEBI" id="CHEBI:76077"/>
        <dbReference type="ChEBI" id="CHEBI:76079"/>
    </reaction>
    <physiologicalReaction direction="left-to-right" evidence="3">
        <dbReference type="Rhea" id="RHEA:38776"/>
    </physiologicalReaction>
</comment>
<comment type="catalytic activity">
    <reaction evidence="3">
        <text>1-hexadecanoyl-2-(4Z,7Z,10Z,13Z,16Z,19Z-docosahexaenoyl)-sn-glycero-3-phosphocholine + N-(acetyl)-sphing-4-enine = 2-(4Z,7Z,10Z,13Z,16Z,19Z-docosahexaenoyl)-sn-glycero-3-phosphocholine + 1-hexadecanoyl-N-(acetyl)-sphing-4-enine</text>
        <dbReference type="Rhea" id="RHEA:38815"/>
        <dbReference type="ChEBI" id="CHEBI:46979"/>
        <dbReference type="ChEBI" id="CHEBI:74963"/>
        <dbReference type="ChEBI" id="CHEBI:76077"/>
        <dbReference type="ChEBI" id="CHEBI:76085"/>
    </reaction>
    <physiologicalReaction direction="left-to-right" evidence="3">
        <dbReference type="Rhea" id="RHEA:38816"/>
    </physiologicalReaction>
</comment>
<comment type="catalytic activity">
    <reaction evidence="3">
        <text>1-hexadecanoyl-2-nonadioyl-sn-glycero-3-phosphocholine + N-(acetyl)-sphing-4-enine = 2-nonadioyl-sn-glycero-3-phosphocholine + 1-hexadecanoyl-N-(acetyl)-sphing-4-enine</text>
        <dbReference type="Rhea" id="RHEA:62472"/>
        <dbReference type="ChEBI" id="CHEBI:46979"/>
        <dbReference type="ChEBI" id="CHEBI:76077"/>
        <dbReference type="ChEBI" id="CHEBI:78207"/>
        <dbReference type="ChEBI" id="CHEBI:145780"/>
    </reaction>
    <physiologicalReaction direction="left-to-right" evidence="3">
        <dbReference type="Rhea" id="RHEA:62473"/>
    </physiologicalReaction>
</comment>
<comment type="catalytic activity">
    <reaction evidence="3">
        <text>1-octadecanoyl-2-(9Z-octadecenoyl)-sn-glycero-3-phosphocholine + N-(acetyl)-sphing-4-enine = 1-octadecanoyl-N-(acetyl)-sphing-4-enine + 2-(9Z-octadecenoyl)-sn-glycero-3-phosphocholine</text>
        <dbReference type="Rhea" id="RHEA:38799"/>
        <dbReference type="ChEBI" id="CHEBI:46979"/>
        <dbReference type="ChEBI" id="CHEBI:75034"/>
        <dbReference type="ChEBI" id="CHEBI:76071"/>
        <dbReference type="ChEBI" id="CHEBI:76074"/>
    </reaction>
    <physiologicalReaction direction="left-to-right" evidence="3">
        <dbReference type="Rhea" id="RHEA:38800"/>
    </physiologicalReaction>
</comment>
<comment type="catalytic activity">
    <reaction evidence="3">
        <text>1-(9Z)-octadecenoyl-2-octadecanoyl-sn-glycero-3-phosphocholine + N-(acetyl)-sphing-4-enine = 2-octadecanoyl-sn-glycero-3-phosphocholine + 1-(9Z-octadecenoyl)-N-(acetyl)-sphing-4-enine</text>
        <dbReference type="Rhea" id="RHEA:38791"/>
        <dbReference type="ChEBI" id="CHEBI:46979"/>
        <dbReference type="ChEBI" id="CHEBI:76054"/>
        <dbReference type="ChEBI" id="CHEBI:76073"/>
        <dbReference type="ChEBI" id="CHEBI:76076"/>
    </reaction>
    <physiologicalReaction direction="left-to-right" evidence="3">
        <dbReference type="Rhea" id="RHEA:38792"/>
    </physiologicalReaction>
</comment>
<comment type="catalytic activity">
    <reaction evidence="2">
        <text>1-octadecanoyl-2-(5Z,8Z,11Z,14Z-eicosatetraenoyl)-sn-glycero-3-phosphocholine + N-(acetyl)-sphing-4-enine = 1-octadecanoyl-N-(acetyl)-sphing-4-enine + 2-(5Z,8Z,11Z,14Z)-eicosatetraenoyl-sn-glycero-3-phosphocholine</text>
        <dbReference type="Rhea" id="RHEA:57120"/>
        <dbReference type="ChEBI" id="CHEBI:46979"/>
        <dbReference type="ChEBI" id="CHEBI:74965"/>
        <dbReference type="ChEBI" id="CHEBI:76074"/>
        <dbReference type="ChEBI" id="CHEBI:76079"/>
    </reaction>
    <physiologicalReaction direction="left-to-right" evidence="2">
        <dbReference type="Rhea" id="RHEA:57121"/>
    </physiologicalReaction>
</comment>
<comment type="catalytic activity">
    <reaction evidence="3">
        <text>1-(9Z-octadecenoyl)-2-hexadecanoyl-sn-glycero-3-phosphocholine + N-(acetyl)-sphing-4-enine = 1-(9Z-octadecenoyl)-N-(acetyl)-sphing-4-enine + 2-hexadecanoyl-sn-glycero-3-phosphocholine</text>
        <dbReference type="Rhea" id="RHEA:38767"/>
        <dbReference type="ChEBI" id="CHEBI:46979"/>
        <dbReference type="ChEBI" id="CHEBI:74667"/>
        <dbReference type="ChEBI" id="CHEBI:76054"/>
        <dbReference type="ChEBI" id="CHEBI:76078"/>
    </reaction>
    <physiologicalReaction direction="left-to-right" evidence="3">
        <dbReference type="Rhea" id="RHEA:38768"/>
    </physiologicalReaction>
</comment>
<comment type="catalytic activity">
    <reaction evidence="8">
        <text>N-(acetyl)-sphing-4-enine + a 1,2-diacyl-sn-glycero-3-phosphocholine = 1-O-acyl-N-(acetyl)-sphing-4-enine + a 1-acyl-sn-glycero-3-phosphocholine</text>
        <dbReference type="Rhea" id="RHEA:44508"/>
        <dbReference type="ChEBI" id="CHEBI:46979"/>
        <dbReference type="ChEBI" id="CHEBI:57643"/>
        <dbReference type="ChEBI" id="CHEBI:58168"/>
        <dbReference type="ChEBI" id="CHEBI:84483"/>
    </reaction>
    <physiologicalReaction direction="left-to-right" evidence="8">
        <dbReference type="Rhea" id="RHEA:44509"/>
    </physiologicalReaction>
</comment>
<comment type="catalytic activity">
    <reaction evidence="3">
        <text>1-hexadecanoyl-2-(9Z-octadecenoyl)-sn-glycero-3-phosphocholine + N-(acetyl)-sphing-4-enine = 1-(9Z-octadecenoyl)-N-(acetyl)-sphing-4-enine + 1-hexadecanoyl-sn-glycero-3-phosphocholine</text>
        <dbReference type="Rhea" id="RHEA:38755"/>
        <dbReference type="ChEBI" id="CHEBI:46979"/>
        <dbReference type="ChEBI" id="CHEBI:72998"/>
        <dbReference type="ChEBI" id="CHEBI:73001"/>
        <dbReference type="ChEBI" id="CHEBI:76054"/>
    </reaction>
    <physiologicalReaction direction="left-to-right" evidence="3">
        <dbReference type="Rhea" id="RHEA:38756"/>
    </physiologicalReaction>
</comment>
<comment type="catalytic activity">
    <reaction evidence="3">
        <text>1-hexadecanoyl-2-(9Z,12Z-octadecadienoyl)-sn-glycero-3-phosphocholine + N-(acetyl)-sphing-4-enine = 1-(9Z,12Z-octadecadienoyl)-N-acetylsphing-4-enine + 1-hexadecanoyl-sn-glycero-3-phosphocholine</text>
        <dbReference type="Rhea" id="RHEA:38807"/>
        <dbReference type="ChEBI" id="CHEBI:46979"/>
        <dbReference type="ChEBI" id="CHEBI:72998"/>
        <dbReference type="ChEBI" id="CHEBI:73002"/>
        <dbReference type="ChEBI" id="CHEBI:76086"/>
    </reaction>
    <physiologicalReaction direction="left-to-right" evidence="3">
        <dbReference type="Rhea" id="RHEA:38808"/>
    </physiologicalReaction>
</comment>
<comment type="catalytic activity">
    <reaction evidence="3">
        <text>1-hexadecanoyl-2-(5Z,8Z,11Z,14Z-eicosatetraenoyl)-sn-glycero-3-phosphocholine + N-(acetyl)-sphing-4-enine = 1-(5Z,8Z,11Z,14Z)-eicosatetraenoyl-N-(acetyl)-sphing-4-enine + 1-hexadecanoyl-sn-glycero-3-phosphocholine</text>
        <dbReference type="Rhea" id="RHEA:38771"/>
        <dbReference type="ChEBI" id="CHEBI:46979"/>
        <dbReference type="ChEBI" id="CHEBI:72998"/>
        <dbReference type="ChEBI" id="CHEBI:73003"/>
        <dbReference type="ChEBI" id="CHEBI:76080"/>
    </reaction>
    <physiologicalReaction direction="left-to-right" evidence="3">
        <dbReference type="Rhea" id="RHEA:38772"/>
    </physiologicalReaction>
</comment>
<comment type="catalytic activity">
    <reaction evidence="3">
        <text>1-hexadecanoyl-2-(4Z,7Z,10Z,13Z,16Z,19Z-docosahexaenoyl)-sn-glycero-3-phosphocholine + N-(acetyl)-sphing-4-enine = 1-(4Z,7Z,10Z,13Z,16Z,19Z-docosahexaenoyl)-N-(acetyl)-sphing-4-enine + 1-hexadecanoyl-sn-glycero-3-phosphocholine</text>
        <dbReference type="Rhea" id="RHEA:38819"/>
        <dbReference type="ChEBI" id="CHEBI:46979"/>
        <dbReference type="ChEBI" id="CHEBI:72998"/>
        <dbReference type="ChEBI" id="CHEBI:74963"/>
        <dbReference type="ChEBI" id="CHEBI:76087"/>
    </reaction>
    <physiologicalReaction direction="left-to-right" evidence="3">
        <dbReference type="Rhea" id="RHEA:38820"/>
    </physiologicalReaction>
</comment>
<comment type="catalytic activity">
    <reaction evidence="3">
        <text>1-octadecanoyl-2-(9Z-octadecenoyl)-sn-glycero-3-phosphocholine + N-(acetyl)-sphing-4-enine = 1-(9Z-octadecenoyl)-N-(acetyl)-sphing-4-enine + 1-octadecanoyl-sn-glycero-3-phosphocholine</text>
        <dbReference type="Rhea" id="RHEA:38795"/>
        <dbReference type="ChEBI" id="CHEBI:46979"/>
        <dbReference type="ChEBI" id="CHEBI:73858"/>
        <dbReference type="ChEBI" id="CHEBI:75034"/>
        <dbReference type="ChEBI" id="CHEBI:76054"/>
    </reaction>
    <physiologicalReaction direction="left-to-right" evidence="3">
        <dbReference type="Rhea" id="RHEA:38796"/>
    </physiologicalReaction>
</comment>
<comment type="catalytic activity">
    <reaction evidence="2">
        <text>1-octadecanoyl-2-(9Z,12Z)-octadecadienoyl-sn-glycero-3-phosphocholine + N-(acetyl)-sphing-4-enine = 1-(9Z,12Z-octadecadienoyl)-N-acetylsphing-4-enine + 1-octadecanoyl-sn-glycero-3-phosphocholine</text>
        <dbReference type="Rhea" id="RHEA:57108"/>
        <dbReference type="ChEBI" id="CHEBI:46979"/>
        <dbReference type="ChEBI" id="CHEBI:73858"/>
        <dbReference type="ChEBI" id="CHEBI:76086"/>
        <dbReference type="ChEBI" id="CHEBI:84822"/>
    </reaction>
    <physiologicalReaction direction="left-to-right" evidence="2">
        <dbReference type="Rhea" id="RHEA:57109"/>
    </physiologicalReaction>
</comment>
<comment type="catalytic activity">
    <reaction evidence="3">
        <text>1-(9Z-octadecenoyl)-2-hexadecanoyl-sn-glycero-3-phosphocholine + N-(acetyl)-sphing-4-enine = 1-hexadecanoyl-N-(acetyl)-sphing-4-enine + 1-(9Z-octadecenoyl)-sn-glycero-3-phosphocholine</text>
        <dbReference type="Rhea" id="RHEA:38763"/>
        <dbReference type="ChEBI" id="CHEBI:28610"/>
        <dbReference type="ChEBI" id="CHEBI:46979"/>
        <dbReference type="ChEBI" id="CHEBI:74667"/>
        <dbReference type="ChEBI" id="CHEBI:76077"/>
    </reaction>
    <physiologicalReaction direction="left-to-right" evidence="3">
        <dbReference type="Rhea" id="RHEA:38764"/>
    </physiologicalReaction>
</comment>
<comment type="catalytic activity">
    <reaction evidence="3">
        <text>1-(9Z)-octadecenoyl-2-octadecanoyl-sn-glycero-3-phosphocholine + N-(acetyl)-sphing-4-enine = 1-octadecanoyl-N-(acetyl)-sphing-4-enine + 1-(9Z-octadecenoyl)-sn-glycero-3-phosphocholine</text>
        <dbReference type="Rhea" id="RHEA:38803"/>
        <dbReference type="ChEBI" id="CHEBI:28610"/>
        <dbReference type="ChEBI" id="CHEBI:46979"/>
        <dbReference type="ChEBI" id="CHEBI:76073"/>
        <dbReference type="ChEBI" id="CHEBI:76074"/>
    </reaction>
    <physiologicalReaction direction="left-to-right" evidence="3">
        <dbReference type="Rhea" id="RHEA:38804"/>
    </physiologicalReaction>
</comment>
<comment type="catalytic activity">
    <reaction evidence="8">
        <text>1,2-di-(9Z-octadecenoyl)-sn-glycero-3-phosphocholine + N-(acetyl)-sphing-4-enine = 1-(9Z-octadecenoyl)-N-(acetyl)-sphing-4-enine + 1-(9Z-octadecenoyl)-sn-glycero-3-phosphocholine</text>
        <dbReference type="Rhea" id="RHEA:38703"/>
        <dbReference type="ChEBI" id="CHEBI:28610"/>
        <dbReference type="ChEBI" id="CHEBI:46979"/>
        <dbReference type="ChEBI" id="CHEBI:74669"/>
        <dbReference type="ChEBI" id="CHEBI:76054"/>
    </reaction>
    <physiologicalReaction direction="left-to-right" evidence="8">
        <dbReference type="Rhea" id="RHEA:38704"/>
    </physiologicalReaction>
</comment>
<comment type="catalytic activity">
    <reaction evidence="2">
        <text>1-octadecanoyl-2-(5Z,8Z,11Z,14Z-eicosatetraenoyl)-sn-glycero-3-phosphocholine + N-(acetyl)-sphing-4-enine = 1-(5Z,8Z,11Z,14Z)-eicosatetraenoyl-N-(acetyl)-sphing-4-enine + 1-octadecanoyl-sn-glycero-3-phosphocholine</text>
        <dbReference type="Rhea" id="RHEA:57116"/>
        <dbReference type="ChEBI" id="CHEBI:46979"/>
        <dbReference type="ChEBI" id="CHEBI:73858"/>
        <dbReference type="ChEBI" id="CHEBI:74965"/>
        <dbReference type="ChEBI" id="CHEBI:76080"/>
    </reaction>
    <physiologicalReaction direction="left-to-right" evidence="2">
        <dbReference type="Rhea" id="RHEA:57117"/>
    </physiologicalReaction>
</comment>
<comment type="catalytic activity">
    <reaction evidence="2">
        <text>a 1,2-diacyl-sn-glycero-3-phospho-L-serine + N-(acetyl)-sphing-4-enine = a 2-acyl-sn-glycero-3-phospho-L-serine + 1-O-acyl-N-(acetyl)-sphing-4-enine</text>
        <dbReference type="Rhea" id="RHEA:78355"/>
        <dbReference type="ChEBI" id="CHEBI:46979"/>
        <dbReference type="ChEBI" id="CHEBI:57262"/>
        <dbReference type="ChEBI" id="CHEBI:65214"/>
        <dbReference type="ChEBI" id="CHEBI:84483"/>
    </reaction>
    <physiologicalReaction direction="left-to-right" evidence="2">
        <dbReference type="Rhea" id="RHEA:78356"/>
    </physiologicalReaction>
</comment>
<comment type="catalytic activity">
    <reaction evidence="2">
        <text>1-octadecanoyl-2-(9Z-octadecenoyl)-sn-glycero-3-phospho-L-serine + N-(acetyl)-sphing-4-enine = 2-(9Z-octadecenoyl)-sn-glycero-3-phospho-L-serine + 1-octadecanoyl-N-(acetyl)-sphing-4-enine</text>
        <dbReference type="Rhea" id="RHEA:57140"/>
        <dbReference type="ChEBI" id="CHEBI:46979"/>
        <dbReference type="ChEBI" id="CHEBI:76074"/>
        <dbReference type="ChEBI" id="CHEBI:77342"/>
        <dbReference type="ChEBI" id="CHEBI:78260"/>
    </reaction>
    <physiologicalReaction direction="left-to-right" evidence="2">
        <dbReference type="Rhea" id="RHEA:57141"/>
    </physiologicalReaction>
</comment>
<comment type="catalytic activity">
    <reaction evidence="2">
        <text>a 1,2-diacyl-sn-glycero-3-phospho-L-serine + N-(acetyl)-sphing-4-enine = 1-O-acyl-N-(acetyl)-sphing-4-enine + a 1-acyl-sn-glycero-3-phospho-L-serine</text>
        <dbReference type="Rhea" id="RHEA:78351"/>
        <dbReference type="ChEBI" id="CHEBI:46979"/>
        <dbReference type="ChEBI" id="CHEBI:57262"/>
        <dbReference type="ChEBI" id="CHEBI:64379"/>
        <dbReference type="ChEBI" id="CHEBI:84483"/>
    </reaction>
    <physiologicalReaction direction="left-to-right" evidence="2">
        <dbReference type="Rhea" id="RHEA:78352"/>
    </physiologicalReaction>
</comment>
<comment type="catalytic activity">
    <reaction evidence="2">
        <text>1-octadecanoyl-2-(9Z-octadecenoyl)-sn-glycero-3-phospho-L-serine + N-(acetyl)-sphing-4-enine = 1-octadecanoyl-sn-glycero-3-phosphoserine + 1-(9Z-octadecenoyl)-N-(acetyl)-sphing-4-enine</text>
        <dbReference type="Rhea" id="RHEA:57136"/>
        <dbReference type="ChEBI" id="CHEBI:46979"/>
        <dbReference type="ChEBI" id="CHEBI:76054"/>
        <dbReference type="ChEBI" id="CHEBI:78260"/>
        <dbReference type="ChEBI" id="CHEBI:84467"/>
    </reaction>
    <physiologicalReaction direction="left-to-right" evidence="2">
        <dbReference type="Rhea" id="RHEA:57137"/>
    </physiologicalReaction>
</comment>
<comment type="catalytic activity">
    <reaction evidence="2">
        <text>a 1,2-diacyl-sn-glycero-3-phospho-(1'-sn-glycerol) + N-(acetyl)-sphing-4-enine = 2-acyl-sn-glycero-3-phospho-(1'-sn-glycerol) + 1-O-acyl-N-(acetyl)-sphing-4-enine</text>
        <dbReference type="Rhea" id="RHEA:78359"/>
        <dbReference type="ChEBI" id="CHEBI:46979"/>
        <dbReference type="ChEBI" id="CHEBI:64716"/>
        <dbReference type="ChEBI" id="CHEBI:76528"/>
        <dbReference type="ChEBI" id="CHEBI:84483"/>
    </reaction>
    <physiologicalReaction direction="left-to-right" evidence="2">
        <dbReference type="Rhea" id="RHEA:78360"/>
    </physiologicalReaction>
</comment>
<comment type="catalytic activity">
    <reaction evidence="2">
        <text>1-octadecanoyl-2-(9Z-octadecenoyl)-sn-glycero-3-phospho-(1'-sn-glycerol) + N-(acetyl)-sphing-4-enine = 2-(9Z-octadecenoyl)-sn-glycero-3-phospho-(1'-sn-glycerol) + 1-octadecanoyl-N-(acetyl)-sphing-4-enine</text>
        <dbReference type="Rhea" id="RHEA:57144"/>
        <dbReference type="ChEBI" id="CHEBI:46979"/>
        <dbReference type="ChEBI" id="CHEBI:72845"/>
        <dbReference type="ChEBI" id="CHEBI:76074"/>
        <dbReference type="ChEBI" id="CHEBI:141490"/>
    </reaction>
    <physiologicalReaction direction="left-to-right" evidence="2">
        <dbReference type="Rhea" id="RHEA:57145"/>
    </physiologicalReaction>
</comment>
<comment type="catalytic activity">
    <reaction evidence="2">
        <text>a 1,2-diacyl-sn-glycero-3-phospho-(1'-sn-glycerol) + N-(acetyl)-sphing-4-enine = 1-O-acyl-N-(acetyl)-sphing-4-enine + 1-acyl-sn-glycero-3-phospho-(1'-sn-glycerol)</text>
        <dbReference type="Rhea" id="RHEA:78363"/>
        <dbReference type="ChEBI" id="CHEBI:46979"/>
        <dbReference type="ChEBI" id="CHEBI:64716"/>
        <dbReference type="ChEBI" id="CHEBI:64840"/>
        <dbReference type="ChEBI" id="CHEBI:84483"/>
    </reaction>
    <physiologicalReaction direction="left-to-right" evidence="2">
        <dbReference type="Rhea" id="RHEA:78364"/>
    </physiologicalReaction>
</comment>
<comment type="catalytic activity">
    <reaction evidence="2">
        <text>1-octadecanoyl-2-(9Z-octadecenoyl)-sn-glycero-3-phospho-(1'-sn-glycerol) + N-(acetyl)-sphing-4-enine = 1-octadecanoyl-sn-glycero-3-phospho-(1'-sn-glycerol) + 1-(9Z-octadecenoyl)-N-(acetyl)-sphing-4-enine</text>
        <dbReference type="Rhea" id="RHEA:57148"/>
        <dbReference type="ChEBI" id="CHEBI:46979"/>
        <dbReference type="ChEBI" id="CHEBI:72827"/>
        <dbReference type="ChEBI" id="CHEBI:72845"/>
        <dbReference type="ChEBI" id="CHEBI:76054"/>
    </reaction>
    <physiologicalReaction direction="left-to-right" evidence="2">
        <dbReference type="Rhea" id="RHEA:57149"/>
    </physiologicalReaction>
</comment>
<comment type="catalytic activity">
    <reaction evidence="3">
        <text>an N-acylethanolamine + a 1,2-diacyl-sn-glycero-3-phosphocholine = 2-(acylamino)ethyl fatty acid + a 2-acyl-sn-glycero-3-phosphocholine</text>
        <dbReference type="Rhea" id="RHEA:78055"/>
        <dbReference type="ChEBI" id="CHEBI:52640"/>
        <dbReference type="ChEBI" id="CHEBI:57643"/>
        <dbReference type="ChEBI" id="CHEBI:57875"/>
        <dbReference type="ChEBI" id="CHEBI:84481"/>
    </reaction>
    <physiologicalReaction direction="left-to-right" evidence="3">
        <dbReference type="Rhea" id="RHEA:78056"/>
    </physiologicalReaction>
</comment>
<comment type="catalytic activity">
    <reaction evidence="3">
        <text>an N-acylethanolamine + a 1,2-diacyl-sn-glycero-3-phosphocholine = 2-(acylamino)ethyl fatty acid + a 1-acyl-sn-glycero-3-phosphocholine</text>
        <dbReference type="Rhea" id="RHEA:78059"/>
        <dbReference type="ChEBI" id="CHEBI:52640"/>
        <dbReference type="ChEBI" id="CHEBI:57643"/>
        <dbReference type="ChEBI" id="CHEBI:58168"/>
        <dbReference type="ChEBI" id="CHEBI:84481"/>
    </reaction>
    <physiologicalReaction direction="left-to-right" evidence="3">
        <dbReference type="Rhea" id="RHEA:78060"/>
    </physiologicalReaction>
</comment>
<comment type="catalytic activity">
    <reaction evidence="3">
        <text>N-(5Z,8Z,11Z,14Z-eicosatetraenoyl)-ethanolamine + 1,2-di-(9Z-octadecenoyl)-sn-glycero-3-phosphocholine = 2-[(5Z,8Z,11Z,14Z)-eicosatetraenoylamino]ethyl (9Z)-octadecenoate + (9Z-octadecenoyl)-sn-glycero-3-phosphocholine</text>
        <dbReference type="Rhea" id="RHEA:38751"/>
        <dbReference type="ChEBI" id="CHEBI:2700"/>
        <dbReference type="ChEBI" id="CHEBI:74669"/>
        <dbReference type="ChEBI" id="CHEBI:76070"/>
        <dbReference type="ChEBI" id="CHEBI:76083"/>
    </reaction>
    <physiologicalReaction direction="left-to-right" evidence="3">
        <dbReference type="Rhea" id="RHEA:38752"/>
    </physiologicalReaction>
</comment>
<comment type="catalytic activity">
    <reaction evidence="3">
        <text>N-(9Z-octadecenoyl) ethanolamine + 1,2-di-(9Z-octadecenoyl)-sn-glycero-3-phosphocholine = 2-[(9Z)-octadecenoylamino]ethyl (9Z)-octadecenoate + (9Z-octadecenoyl)-sn-glycero-3-phosphocholine</text>
        <dbReference type="Rhea" id="RHEA:38747"/>
        <dbReference type="ChEBI" id="CHEBI:71466"/>
        <dbReference type="ChEBI" id="CHEBI:74669"/>
        <dbReference type="ChEBI" id="CHEBI:76068"/>
        <dbReference type="ChEBI" id="CHEBI:76083"/>
    </reaction>
    <physiologicalReaction direction="left-to-right" evidence="3">
        <dbReference type="Rhea" id="RHEA:38748"/>
    </physiologicalReaction>
</comment>
<comment type="catalytic activity">
    <reaction evidence="3">
        <text>a 3-acyl-sn-glycerol + a 1,2-diacyl-sn-glycero-3-phosphocholine = a 1,3-diacylglycerol + a 1-acyl-sn-glycero-3-phosphocholine</text>
        <dbReference type="Rhea" id="RHEA:78131"/>
        <dbReference type="ChEBI" id="CHEBI:47777"/>
        <dbReference type="ChEBI" id="CHEBI:57643"/>
        <dbReference type="ChEBI" id="CHEBI:58168"/>
        <dbReference type="ChEBI" id="CHEBI:64760"/>
    </reaction>
    <physiologicalReaction direction="left-to-right" evidence="3">
        <dbReference type="Rhea" id="RHEA:78132"/>
    </physiologicalReaction>
</comment>
<comment type="catalytic activity">
    <reaction evidence="3">
        <text>a 3-acyl-sn-glycerol + a 1,2-diacyl-sn-glycero-3-phosphocholine = a 1,3-diacylglycerol + a 2-acyl-sn-glycero-3-phosphocholine</text>
        <dbReference type="Rhea" id="RHEA:78135"/>
        <dbReference type="ChEBI" id="CHEBI:47777"/>
        <dbReference type="ChEBI" id="CHEBI:57643"/>
        <dbReference type="ChEBI" id="CHEBI:57875"/>
        <dbReference type="ChEBI" id="CHEBI:64760"/>
    </reaction>
    <physiologicalReaction direction="left-to-right" evidence="3">
        <dbReference type="Rhea" id="RHEA:78136"/>
    </physiologicalReaction>
</comment>
<comment type="catalytic activity">
    <reaction evidence="3">
        <text>3-(9Z-octadecenoyl)-sn-glycerol + 1,2-di-(9Z-octadecenoyl)-sn-glycero-3-phosphocholine = 1,3-di-(9Z-octadecenoyl)-glycerol + (9Z-octadecenoyl)-sn-glycero-3-phosphocholine</text>
        <dbReference type="Rhea" id="RHEA:38743"/>
        <dbReference type="ChEBI" id="CHEBI:74669"/>
        <dbReference type="ChEBI" id="CHEBI:75735"/>
        <dbReference type="ChEBI" id="CHEBI:75938"/>
        <dbReference type="ChEBI" id="CHEBI:76083"/>
    </reaction>
    <physiologicalReaction direction="left-to-right" evidence="3">
        <dbReference type="Rhea" id="RHEA:38744"/>
    </physiologicalReaction>
</comment>
<comment type="catalytic activity">
    <reaction evidence="3">
        <text>3-hexadecanoyl-sn-glycerol + 1,2-di-(9Z-octadecenoyl)-sn-glycero-3-phosphocholine = 1-(9Z)-octadecenoyl-3-hexadecanoyl-sn-glycerol + (9Z-octadecenoyl)-sn-glycero-3-phosphocholine</text>
        <dbReference type="Rhea" id="RHEA:38731"/>
        <dbReference type="ChEBI" id="CHEBI:64757"/>
        <dbReference type="ChEBI" id="CHEBI:74669"/>
        <dbReference type="ChEBI" id="CHEBI:75867"/>
        <dbReference type="ChEBI" id="CHEBI:76083"/>
    </reaction>
    <physiologicalReaction direction="left-to-right" evidence="3">
        <dbReference type="Rhea" id="RHEA:38732"/>
    </physiologicalReaction>
</comment>
<comment type="catalytic activity">
    <reaction evidence="3">
        <text>a 1-acyl-sn-glycerol + a 1,2-diacyl-sn-glycero-3-phosphocholine = a 1,3-diacylglycerol + a 2-acyl-sn-glycero-3-phosphocholine</text>
        <dbReference type="Rhea" id="RHEA:78139"/>
        <dbReference type="ChEBI" id="CHEBI:47777"/>
        <dbReference type="ChEBI" id="CHEBI:57643"/>
        <dbReference type="ChEBI" id="CHEBI:57875"/>
        <dbReference type="ChEBI" id="CHEBI:64683"/>
    </reaction>
    <physiologicalReaction direction="left-to-right" evidence="3">
        <dbReference type="Rhea" id="RHEA:78140"/>
    </physiologicalReaction>
</comment>
<comment type="catalytic activity">
    <reaction evidence="3">
        <text>a 1-acyl-sn-glycerol + a 1,2-diacyl-sn-glycero-3-phosphocholine = a 1,3-diacylglycerol + a 1-acyl-sn-glycero-3-phosphocholine</text>
        <dbReference type="Rhea" id="RHEA:78143"/>
        <dbReference type="ChEBI" id="CHEBI:47777"/>
        <dbReference type="ChEBI" id="CHEBI:57643"/>
        <dbReference type="ChEBI" id="CHEBI:58168"/>
        <dbReference type="ChEBI" id="CHEBI:64683"/>
    </reaction>
    <physiologicalReaction direction="left-to-right" evidence="3">
        <dbReference type="Rhea" id="RHEA:78144"/>
    </physiologicalReaction>
</comment>
<comment type="catalytic activity">
    <reaction evidence="3">
        <text>1-(9Z-octadecenoyl)-sn-glycerol + 1,2-di-(9Z-octadecenoyl)-sn-glycero-3-phosphocholine = 1,3-di-(9Z-octadecenoyl)-glycerol + (9Z-octadecenoyl)-sn-glycero-3-phosphocholine</text>
        <dbReference type="Rhea" id="RHEA:38739"/>
        <dbReference type="ChEBI" id="CHEBI:74669"/>
        <dbReference type="ChEBI" id="CHEBI:75735"/>
        <dbReference type="ChEBI" id="CHEBI:75757"/>
        <dbReference type="ChEBI" id="CHEBI:76083"/>
    </reaction>
    <physiologicalReaction direction="left-to-right" evidence="3">
        <dbReference type="Rhea" id="RHEA:38740"/>
    </physiologicalReaction>
</comment>
<comment type="catalytic activity">
    <reaction evidence="3">
        <text>1-hexadecanoyl-sn-glycerol + 1,2-di-(9Z-octadecenoyl)-sn-glycero-3-phosphocholine = 1-hexadecanoyl-3-(9Z)-octadecenoyl-sn-glycerol + (9Z-octadecenoyl)-sn-glycero-3-phosphocholine</text>
        <dbReference type="Rhea" id="RHEA:38727"/>
        <dbReference type="ChEBI" id="CHEBI:74669"/>
        <dbReference type="ChEBI" id="CHEBI:75542"/>
        <dbReference type="ChEBI" id="CHEBI:75868"/>
        <dbReference type="ChEBI" id="CHEBI:76083"/>
    </reaction>
    <physiologicalReaction direction="left-to-right" evidence="3">
        <dbReference type="Rhea" id="RHEA:38728"/>
    </physiologicalReaction>
</comment>
<comment type="catalytic activity">
    <reaction evidence="3">
        <text>a 2-acylglycerol + a 1,2-diacyl-sn-glycero-3-phosphocholine = a 1,2-diacylglycerol + a 2-acyl-sn-glycero-3-phosphocholine</text>
        <dbReference type="Rhea" id="RHEA:78443"/>
        <dbReference type="ChEBI" id="CHEBI:17389"/>
        <dbReference type="ChEBI" id="CHEBI:49172"/>
        <dbReference type="ChEBI" id="CHEBI:57643"/>
        <dbReference type="ChEBI" id="CHEBI:57875"/>
    </reaction>
    <physiologicalReaction direction="left-to-right" evidence="3">
        <dbReference type="Rhea" id="RHEA:78444"/>
    </physiologicalReaction>
</comment>
<comment type="catalytic activity">
    <reaction evidence="3">
        <text>a 2-acylglycerol + a 1,2-diacyl-sn-glycero-3-phosphocholine = a 1,2-diacylglycerol + a 1-acyl-sn-glycero-3-phosphocholine</text>
        <dbReference type="Rhea" id="RHEA:78439"/>
        <dbReference type="ChEBI" id="CHEBI:17389"/>
        <dbReference type="ChEBI" id="CHEBI:49172"/>
        <dbReference type="ChEBI" id="CHEBI:57643"/>
        <dbReference type="ChEBI" id="CHEBI:58168"/>
    </reaction>
    <physiologicalReaction direction="left-to-right" evidence="3">
        <dbReference type="Rhea" id="RHEA:78440"/>
    </physiologicalReaction>
</comment>
<comment type="catalytic activity">
    <reaction evidence="3">
        <text>2-hexadecanoylglycerol + 1,2-di-(9Z-octadecenoyl)-sn-glycero-3-phosphocholine = 1-(9Z)-octadecenoyl-2-hexadecanoylglycerol + (9Z-octadecenoyl)-sn-glycero-3-phosphocholine</text>
        <dbReference type="Rhea" id="RHEA:38735"/>
        <dbReference type="ChEBI" id="CHEBI:74669"/>
        <dbReference type="ChEBI" id="CHEBI:75455"/>
        <dbReference type="ChEBI" id="CHEBI:76065"/>
        <dbReference type="ChEBI" id="CHEBI:76083"/>
    </reaction>
    <physiologicalReaction direction="left-to-right" evidence="3">
        <dbReference type="Rhea" id="RHEA:38736"/>
    </physiologicalReaction>
</comment>
<comment type="catalytic activity">
    <reaction evidence="3">
        <text>1-O-alkylglycerol + a 1,2-diacyl-sn-glycero-3-phosphocholine = 1-O-alkyl-3-acylglycerol + a 1-acyl-sn-glycero-3-phosphocholine</text>
        <dbReference type="Rhea" id="RHEA:78039"/>
        <dbReference type="ChEBI" id="CHEBI:57643"/>
        <dbReference type="ChEBI" id="CHEBI:58168"/>
        <dbReference type="ChEBI" id="CHEBI:76225"/>
        <dbReference type="ChEBI" id="CHEBI:77997"/>
    </reaction>
    <physiologicalReaction direction="left-to-right" evidence="3">
        <dbReference type="Rhea" id="RHEA:78040"/>
    </physiologicalReaction>
</comment>
<comment type="catalytic activity">
    <reaction evidence="3">
        <text>1-O-alkylglycerol + a 1,2-diacyl-sn-glycero-3-phosphocholine = 1-O-alkyl-3-acylglycerol + a 2-acyl-sn-glycero-3-phosphocholine</text>
        <dbReference type="Rhea" id="RHEA:78043"/>
        <dbReference type="ChEBI" id="CHEBI:57643"/>
        <dbReference type="ChEBI" id="CHEBI:57875"/>
        <dbReference type="ChEBI" id="CHEBI:76225"/>
        <dbReference type="ChEBI" id="CHEBI:77997"/>
    </reaction>
    <physiologicalReaction direction="left-to-right" evidence="3">
        <dbReference type="Rhea" id="RHEA:78044"/>
    </physiologicalReaction>
</comment>
<comment type="catalytic activity">
    <reaction evidence="3">
        <text>1-O-hexadecylglycerol + 1,2-di-(9Z-octadecenoyl)-sn-glycero-3-phosphocholine = 1-O-hexadecyl-3-(9Z)-octadecenoylglycerol + (9Z-octadecenoyl)-sn-glycero-3-phosphocholine</text>
        <dbReference type="Rhea" id="RHEA:38711"/>
        <dbReference type="ChEBI" id="CHEBI:74669"/>
        <dbReference type="ChEBI" id="CHEBI:76061"/>
        <dbReference type="ChEBI" id="CHEBI:76062"/>
        <dbReference type="ChEBI" id="CHEBI:76083"/>
    </reaction>
    <physiologicalReaction direction="left-to-right" evidence="3">
        <dbReference type="Rhea" id="RHEA:38712"/>
    </physiologicalReaction>
</comment>
<comment type="catalytic activity">
    <reaction evidence="3">
        <text>1-O-alkyl-2-acyl-sn-glycerol + a 1,2-diacyl-sn-glycero-3-phosphocholine = 1-O-alkyl-2,3-diacyl-sn-glycerol + a 2-acyl-sn-glycero-3-phosphocholine</text>
        <dbReference type="Rhea" id="RHEA:78431"/>
        <dbReference type="ChEBI" id="CHEBI:52595"/>
        <dbReference type="ChEBI" id="CHEBI:57643"/>
        <dbReference type="ChEBI" id="CHEBI:57875"/>
        <dbReference type="ChEBI" id="CHEBI:76585"/>
    </reaction>
    <physiologicalReaction direction="left-to-right" evidence="3">
        <dbReference type="Rhea" id="RHEA:78432"/>
    </physiologicalReaction>
</comment>
<comment type="catalytic activity">
    <reaction evidence="3">
        <text>1-O-alkyl-2-acyl-sn-glycerol + a 1,2-diacyl-sn-glycero-3-phosphocholine = 1-O-alkyl-2,3-diacyl-sn-glycerol + a 1-acyl-sn-glycero-3-phosphocholine</text>
        <dbReference type="Rhea" id="RHEA:78435"/>
        <dbReference type="ChEBI" id="CHEBI:52595"/>
        <dbReference type="ChEBI" id="CHEBI:57643"/>
        <dbReference type="ChEBI" id="CHEBI:58168"/>
        <dbReference type="ChEBI" id="CHEBI:76585"/>
    </reaction>
    <physiologicalReaction direction="left-to-right" evidence="3">
        <dbReference type="Rhea" id="RHEA:78436"/>
    </physiologicalReaction>
</comment>
<comment type="catalytic activity">
    <reaction evidence="3">
        <text>1-O-hexadecyl-2-acetyl-sn-glycerol + 1,2-di-(9Z-octadecenoyl)-sn-glycero-3-phosphocholine = 1-O-hexadecyl-2-acetyl-3-(9Z)-octadecenoyl-sn-glycerol + (9Z-octadecenoyl)-sn-glycero-3-phosphocholine</text>
        <dbReference type="Rhea" id="RHEA:38707"/>
        <dbReference type="ChEBI" id="CHEBI:74669"/>
        <dbReference type="ChEBI" id="CHEBI:75936"/>
        <dbReference type="ChEBI" id="CHEBI:76055"/>
        <dbReference type="ChEBI" id="CHEBI:76083"/>
    </reaction>
    <physiologicalReaction direction="left-to-right" evidence="3">
        <dbReference type="Rhea" id="RHEA:38708"/>
    </physiologicalReaction>
</comment>
<comment type="catalytic activity">
    <reaction evidence="3">
        <text>1-O-hexadecyl-2-O-methyl-sn-glycerol + 1,2-di-(9Z-octadecenoyl)-sn-glycero-3-phosphocholine = 1-O-hexadecyl-2-O-methyl-3-(9Z)-octadecenoyl-sn-glycerol + (9Z-octadecenoyl)-sn-glycero-3-phosphocholine</text>
        <dbReference type="Rhea" id="RHEA:38723"/>
        <dbReference type="ChEBI" id="CHEBI:74669"/>
        <dbReference type="ChEBI" id="CHEBI:76063"/>
        <dbReference type="ChEBI" id="CHEBI:76064"/>
        <dbReference type="ChEBI" id="CHEBI:76083"/>
    </reaction>
    <physiologicalReaction direction="left-to-right" evidence="3">
        <dbReference type="Rhea" id="RHEA:38724"/>
    </physiologicalReaction>
</comment>
<comment type="catalytic activity">
    <reaction evidence="4">
        <text>a 1,2-diacyl-sn-glycero-3-phosphoethanolamine + H2O = a 1-acyl-sn-glycero-3-phosphoethanolamine + a fatty acid + H(+)</text>
        <dbReference type="Rhea" id="RHEA:44604"/>
        <dbReference type="ChEBI" id="CHEBI:15377"/>
        <dbReference type="ChEBI" id="CHEBI:15378"/>
        <dbReference type="ChEBI" id="CHEBI:28868"/>
        <dbReference type="ChEBI" id="CHEBI:64381"/>
        <dbReference type="ChEBI" id="CHEBI:64612"/>
    </reaction>
    <physiologicalReaction direction="left-to-right" evidence="4">
        <dbReference type="Rhea" id="RHEA:44605"/>
    </physiologicalReaction>
</comment>
<comment type="catalytic activity">
    <reaction evidence="4">
        <text>1-acyl-2-(5Z,8Z,11Z,14Z)-eicosatetraenoyl-sn-glycero-3-phosphoethanolamine + H2O = a 1-acyl-sn-glycero-3-phosphoethanolamine + (5Z,8Z,11Z,14Z)-eicosatetraenoate + H(+)</text>
        <dbReference type="Rhea" id="RHEA:40647"/>
        <dbReference type="ChEBI" id="CHEBI:15377"/>
        <dbReference type="ChEBI" id="CHEBI:15378"/>
        <dbReference type="ChEBI" id="CHEBI:32395"/>
        <dbReference type="ChEBI" id="CHEBI:64381"/>
        <dbReference type="ChEBI" id="CHEBI:75067"/>
    </reaction>
    <physiologicalReaction direction="left-to-right" evidence="4">
        <dbReference type="Rhea" id="RHEA:40648"/>
    </physiologicalReaction>
</comment>
<comment type="catalytic activity">
    <reaction evidence="2">
        <text>a 1,2-diacyl-sn-glycero-3-phospho-(1'-sn-glycerol) + H2O = 1-acyl-sn-glycero-3-phospho-(1'-sn-glycerol) + a fatty acid + H(+)</text>
        <dbReference type="Rhea" id="RHEA:44416"/>
        <dbReference type="ChEBI" id="CHEBI:15377"/>
        <dbReference type="ChEBI" id="CHEBI:15378"/>
        <dbReference type="ChEBI" id="CHEBI:28868"/>
        <dbReference type="ChEBI" id="CHEBI:64716"/>
        <dbReference type="ChEBI" id="CHEBI:64840"/>
    </reaction>
    <physiologicalReaction direction="left-to-right" evidence="2">
        <dbReference type="Rhea" id="RHEA:44417"/>
    </physiologicalReaction>
</comment>
<comment type="catalytic activity">
    <reaction evidence="2">
        <text>1-hexadecanoyl-2-(9Z-octadecenoyl)-sn-glycero-3-phospho-(1'-sn-glycerol) + H2O = 1-hexadecanoyl-sn-glycero-3-phospho-(1'-sn-glycerol) + (9Z)-octadecenoate + H(+)</text>
        <dbReference type="Rhea" id="RHEA:40919"/>
        <dbReference type="ChEBI" id="CHEBI:15377"/>
        <dbReference type="ChEBI" id="CHEBI:15378"/>
        <dbReference type="ChEBI" id="CHEBI:30823"/>
        <dbReference type="ChEBI" id="CHEBI:72841"/>
        <dbReference type="ChEBI" id="CHEBI:75158"/>
    </reaction>
    <physiologicalReaction direction="left-to-right" evidence="2">
        <dbReference type="Rhea" id="RHEA:40920"/>
    </physiologicalReaction>
</comment>
<comment type="catalytic activity">
    <reaction evidence="2">
        <text>a 1,2-diacyl-sn-glycero-3-phospho-(1'-sn-glycerol) + H2O = 2-acyl-sn-glycero-3-phospho-(1'-sn-glycerol) + a fatty acid + H(+)</text>
        <dbReference type="Rhea" id="RHEA:67428"/>
        <dbReference type="ChEBI" id="CHEBI:15377"/>
        <dbReference type="ChEBI" id="CHEBI:15378"/>
        <dbReference type="ChEBI" id="CHEBI:28868"/>
        <dbReference type="ChEBI" id="CHEBI:64716"/>
        <dbReference type="ChEBI" id="CHEBI:76528"/>
    </reaction>
    <physiologicalReaction direction="left-to-right" evidence="2">
        <dbReference type="Rhea" id="RHEA:67429"/>
    </physiologicalReaction>
</comment>
<comment type="catalytic activity">
    <reaction evidence="2">
        <text>1-hexadecanoyl-2-(9Z-octadecenoyl)-sn-glycero-3-phospho-(1'-sn-glycerol) + H2O = 2-(9Z-octadecenoyl)-sn-glycero-3-phospho-(1'-sn-glycerol) + hexadecanoate + H(+)</text>
        <dbReference type="Rhea" id="RHEA:74103"/>
        <dbReference type="ChEBI" id="CHEBI:7896"/>
        <dbReference type="ChEBI" id="CHEBI:15377"/>
        <dbReference type="ChEBI" id="CHEBI:15378"/>
        <dbReference type="ChEBI" id="CHEBI:72841"/>
        <dbReference type="ChEBI" id="CHEBI:141490"/>
    </reaction>
    <physiologicalReaction direction="left-to-right" evidence="2">
        <dbReference type="Rhea" id="RHEA:74104"/>
    </physiologicalReaction>
</comment>
<comment type="activity regulation">
    <text evidence="6">Transacylase activity is inhibited by MJ33.</text>
</comment>
<comment type="biophysicochemical properties">
    <phDependence>
        <text evidence="6">Optimum pH is 4.5.</text>
    </phDependence>
</comment>
<comment type="subcellular location">
    <subcellularLocation>
        <location evidence="1">Lysosome</location>
    </subcellularLocation>
    <subcellularLocation>
        <location evidence="2">Secreted</location>
    </subcellularLocation>
    <subcellularLocation>
        <location evidence="2">Membrane</location>
        <topology evidence="2">Peripheral membrane protein</topology>
    </subcellularLocation>
</comment>
<comment type="tissue specificity">
    <text evidence="6">Detected in alveolar macrophages (at protein level). Widely expressed. Expressed at highest levels in alveolar macrophages.</text>
</comment>
<comment type="PTM">
    <text evidence="2">N-glycosylated. N-glycosylation is important for maturation of the enzyme and normal subcellular location.</text>
</comment>
<comment type="similarity">
    <text evidence="5">Belongs to the AB hydrolase superfamily. Lipase family.</text>
</comment>
<feature type="signal peptide" evidence="2">
    <location>
        <begin position="1"/>
        <end position="33"/>
    </location>
</feature>
<feature type="chain" id="PRO_0000413420" description="Lysosomal phospholipase A and acyltransferase" evidence="5">
    <location>
        <begin position="34"/>
        <end position="413"/>
    </location>
</feature>
<feature type="active site" description="Acyl-ester intermediate" evidence="2 5">
    <location>
        <position position="198"/>
    </location>
</feature>
<feature type="active site" description="Charge relay system" evidence="2">
    <location>
        <position position="360"/>
    </location>
</feature>
<feature type="active site" description="Charge relay system" evidence="2">
    <location>
        <position position="392"/>
    </location>
</feature>
<feature type="binding site" evidence="2">
    <location>
        <position position="46"/>
    </location>
    <ligand>
        <name>substrate</name>
    </ligand>
</feature>
<feature type="binding site" evidence="2">
    <location>
        <position position="198"/>
    </location>
    <ligand>
        <name>Zn(2+)</name>
        <dbReference type="ChEBI" id="CHEBI:29105"/>
    </ligand>
</feature>
<feature type="binding site" evidence="2">
    <location>
        <position position="199"/>
    </location>
    <ligand>
        <name>substrate</name>
    </ligand>
</feature>
<feature type="binding site" evidence="2">
    <location>
        <position position="355"/>
    </location>
    <ligand>
        <name>Zn(2+)</name>
        <dbReference type="ChEBI" id="CHEBI:29105"/>
    </ligand>
</feature>
<feature type="binding site" evidence="2">
    <location>
        <position position="392"/>
    </location>
    <ligand>
        <name>Zn(2+)</name>
        <dbReference type="ChEBI" id="CHEBI:29105"/>
    </ligand>
</feature>
<feature type="glycosylation site" description="N-linked (GlcNAc...) asparagine" evidence="5">
    <location>
        <position position="99"/>
    </location>
</feature>
<feature type="glycosylation site" description="N-linked (GlcNAc...) asparagine" evidence="5">
    <location>
        <position position="273"/>
    </location>
</feature>
<feature type="glycosylation site" description="N-linked (GlcNAc...) asparagine" evidence="5">
    <location>
        <position position="289"/>
    </location>
</feature>
<feature type="glycosylation site" description="N-linked (GlcNAc...) asparagine" evidence="5">
    <location>
        <position position="398"/>
    </location>
</feature>
<feature type="disulfide bond" evidence="2">
    <location>
        <begin position="65"/>
        <end position="89"/>
    </location>
</feature>
<gene>
    <name type="primary">Pla2g15</name>
    <name type="synonym">Lypla3</name>
</gene>
<reference key="1">
    <citation type="journal article" date="2004" name="J. Biol. Chem.">
        <title>Lysosomal phospholipase A2 is selectively expressed in alveolar macrophages.</title>
        <authorList>
            <person name="Abe A."/>
            <person name="Hiraoka M."/>
            <person name="Wild S."/>
            <person name="Wilcoxen S.E."/>
            <person name="Paine R."/>
            <person name="Shayman J.A."/>
        </authorList>
    </citation>
    <scope>NUCLEOTIDE SEQUENCE [MRNA]</scope>
    <scope>FUNCTION</scope>
    <scope>CATALYTIC ACTIVITY</scope>
    <scope>ACTIVITY REGULATION</scope>
    <scope>BIOPHYSICOCHEMICAL PROPERTIES</scope>
    <scope>TISSUE SPECIFICITY</scope>
    <source>
        <strain>Wistar</strain>
    </source>
</reference>
<reference key="2">
    <citation type="submission" date="2005-07" db="EMBL/GenBank/DDBJ databases">
        <authorList>
            <person name="Mural R.J."/>
            <person name="Adams M.D."/>
            <person name="Myers E.W."/>
            <person name="Smith H.O."/>
            <person name="Venter J.C."/>
        </authorList>
    </citation>
    <scope>NUCLEOTIDE SEQUENCE [LARGE SCALE GENOMIC DNA]</scope>
    <source>
        <strain>Brown Norway</strain>
    </source>
</reference>
<reference key="3">
    <citation type="journal article" date="2004" name="Genome Res.">
        <title>The status, quality, and expansion of the NIH full-length cDNA project: the Mammalian Gene Collection (MGC).</title>
        <authorList>
            <consortium name="The MGC Project Team"/>
        </authorList>
    </citation>
    <scope>NUCLEOTIDE SEQUENCE [LARGE SCALE MRNA]</scope>
    <source>
        <strain>Brown Norway</strain>
        <tissue>Lung</tissue>
    </source>
</reference>